<proteinExistence type="inferred from homology"/>
<protein>
    <recommendedName>
        <fullName evidence="1">N-acetyl-gamma-glutamyl-phosphate reductase</fullName>
        <shortName evidence="1">AGPR</shortName>
        <ecNumber evidence="1">1.2.1.38</ecNumber>
    </recommendedName>
    <alternativeName>
        <fullName evidence="1">N-acetyl-glutamate semialdehyde dehydrogenase</fullName>
        <shortName evidence="1">NAGSA dehydrogenase</shortName>
    </alternativeName>
</protein>
<organism>
    <name type="scientific">Prochlorococcus marinus (strain SARG / CCMP1375 / SS120)</name>
    <dbReference type="NCBI Taxonomy" id="167539"/>
    <lineage>
        <taxon>Bacteria</taxon>
        <taxon>Bacillati</taxon>
        <taxon>Cyanobacteriota</taxon>
        <taxon>Cyanophyceae</taxon>
        <taxon>Synechococcales</taxon>
        <taxon>Prochlorococcaceae</taxon>
        <taxon>Prochlorococcus</taxon>
    </lineage>
</organism>
<sequence length="359" mass="39431">MDSINNKSIRVAVIGASGYGGIQSIRLLKEHPDFEISFLGGYKTAGLKWNDLCPFLPLENDPTINAVDLSEITDKSDIVLLSLPNGISSQLTPKLIKEKVRVVDLSADYRYRSLEEWKSIYSVESSKHSRKDELLCSQAVYGIPEWNSIEISKAKIVACPGCFPTASLLPLMPFLKQGIIETDGIIIDSKSGTSGGGRVPKEHLLLAESSESVEPYSVVGHRHTSEIEQELSNLSGSNIQIQFTPHLVPMVRGLLSTVYARLRDPCLTAEDCKTVLETVYRSCPSVEIQPVGVYPKTKWVRFTNKALISVQVDQRNGRVILMSAIDNLIKGQAGQAIQSLNLMSGLPTCKGLPLIGYYP</sequence>
<reference key="1">
    <citation type="journal article" date="2003" name="Proc. Natl. Acad. Sci. U.S.A.">
        <title>Genome sequence of the cyanobacterium Prochlorococcus marinus SS120, a nearly minimal oxyphototrophic genome.</title>
        <authorList>
            <person name="Dufresne A."/>
            <person name="Salanoubat M."/>
            <person name="Partensky F."/>
            <person name="Artiguenave F."/>
            <person name="Axmann I.M."/>
            <person name="Barbe V."/>
            <person name="Duprat S."/>
            <person name="Galperin M.Y."/>
            <person name="Koonin E.V."/>
            <person name="Le Gall F."/>
            <person name="Makarova K.S."/>
            <person name="Ostrowski M."/>
            <person name="Oztas S."/>
            <person name="Robert C."/>
            <person name="Rogozin I.B."/>
            <person name="Scanlan D.J."/>
            <person name="Tandeau de Marsac N."/>
            <person name="Weissenbach J."/>
            <person name="Wincker P."/>
            <person name="Wolf Y.I."/>
            <person name="Hess W.R."/>
        </authorList>
    </citation>
    <scope>NUCLEOTIDE SEQUENCE [LARGE SCALE GENOMIC DNA]</scope>
    <source>
        <strain>SARG / CCMP1375 / SS120</strain>
    </source>
</reference>
<keyword id="KW-0028">Amino-acid biosynthesis</keyword>
<keyword id="KW-0055">Arginine biosynthesis</keyword>
<keyword id="KW-0963">Cytoplasm</keyword>
<keyword id="KW-0521">NADP</keyword>
<keyword id="KW-0560">Oxidoreductase</keyword>
<keyword id="KW-1185">Reference proteome</keyword>
<dbReference type="EC" id="1.2.1.38" evidence="1"/>
<dbReference type="EMBL" id="AE017126">
    <property type="protein sequence ID" value="AAP99988.1"/>
    <property type="molecule type" value="Genomic_DNA"/>
</dbReference>
<dbReference type="RefSeq" id="NP_875336.1">
    <property type="nucleotide sequence ID" value="NC_005042.1"/>
</dbReference>
<dbReference type="RefSeq" id="WP_011125096.1">
    <property type="nucleotide sequence ID" value="NC_005042.1"/>
</dbReference>
<dbReference type="SMR" id="Q7VBZ8"/>
<dbReference type="STRING" id="167539.Pro_0944"/>
<dbReference type="EnsemblBacteria" id="AAP99988">
    <property type="protein sequence ID" value="AAP99988"/>
    <property type="gene ID" value="Pro_0944"/>
</dbReference>
<dbReference type="KEGG" id="pma:Pro_0944"/>
<dbReference type="PATRIC" id="fig|167539.5.peg.993"/>
<dbReference type="eggNOG" id="COG0002">
    <property type="taxonomic scope" value="Bacteria"/>
</dbReference>
<dbReference type="HOGENOM" id="CLU_006384_0_1_3"/>
<dbReference type="OrthoDB" id="9801289at2"/>
<dbReference type="UniPathway" id="UPA00068">
    <property type="reaction ID" value="UER00108"/>
</dbReference>
<dbReference type="Proteomes" id="UP000001420">
    <property type="component" value="Chromosome"/>
</dbReference>
<dbReference type="GO" id="GO:0005737">
    <property type="term" value="C:cytoplasm"/>
    <property type="evidence" value="ECO:0007669"/>
    <property type="project" value="UniProtKB-SubCell"/>
</dbReference>
<dbReference type="GO" id="GO:0003942">
    <property type="term" value="F:N-acetyl-gamma-glutamyl-phosphate reductase activity"/>
    <property type="evidence" value="ECO:0007669"/>
    <property type="project" value="UniProtKB-UniRule"/>
</dbReference>
<dbReference type="GO" id="GO:0051287">
    <property type="term" value="F:NAD binding"/>
    <property type="evidence" value="ECO:0007669"/>
    <property type="project" value="InterPro"/>
</dbReference>
<dbReference type="GO" id="GO:0070401">
    <property type="term" value="F:NADP+ binding"/>
    <property type="evidence" value="ECO:0007669"/>
    <property type="project" value="InterPro"/>
</dbReference>
<dbReference type="GO" id="GO:0006526">
    <property type="term" value="P:L-arginine biosynthetic process"/>
    <property type="evidence" value="ECO:0007669"/>
    <property type="project" value="UniProtKB-UniRule"/>
</dbReference>
<dbReference type="CDD" id="cd23934">
    <property type="entry name" value="AGPR_1_C"/>
    <property type="match status" value="1"/>
</dbReference>
<dbReference type="CDD" id="cd17895">
    <property type="entry name" value="AGPR_1_N"/>
    <property type="match status" value="1"/>
</dbReference>
<dbReference type="FunFam" id="3.30.360.10:FF:000014">
    <property type="entry name" value="N-acetyl-gamma-glutamyl-phosphate reductase"/>
    <property type="match status" value="1"/>
</dbReference>
<dbReference type="Gene3D" id="3.30.360.10">
    <property type="entry name" value="Dihydrodipicolinate Reductase, domain 2"/>
    <property type="match status" value="1"/>
</dbReference>
<dbReference type="Gene3D" id="3.40.50.720">
    <property type="entry name" value="NAD(P)-binding Rossmann-like Domain"/>
    <property type="match status" value="1"/>
</dbReference>
<dbReference type="HAMAP" id="MF_00150">
    <property type="entry name" value="ArgC_type1"/>
    <property type="match status" value="1"/>
</dbReference>
<dbReference type="InterPro" id="IPR023013">
    <property type="entry name" value="AGPR_AS"/>
</dbReference>
<dbReference type="InterPro" id="IPR000706">
    <property type="entry name" value="AGPR_type-1"/>
</dbReference>
<dbReference type="InterPro" id="IPR036291">
    <property type="entry name" value="NAD(P)-bd_dom_sf"/>
</dbReference>
<dbReference type="InterPro" id="IPR050085">
    <property type="entry name" value="NAGSA_dehydrogenase"/>
</dbReference>
<dbReference type="InterPro" id="IPR000534">
    <property type="entry name" value="Semialdehyde_DH_NAD-bd"/>
</dbReference>
<dbReference type="NCBIfam" id="TIGR01850">
    <property type="entry name" value="argC"/>
    <property type="match status" value="1"/>
</dbReference>
<dbReference type="PANTHER" id="PTHR32338:SF10">
    <property type="entry name" value="N-ACETYL-GAMMA-GLUTAMYL-PHOSPHATE REDUCTASE, CHLOROPLASTIC-RELATED"/>
    <property type="match status" value="1"/>
</dbReference>
<dbReference type="PANTHER" id="PTHR32338">
    <property type="entry name" value="N-ACETYL-GAMMA-GLUTAMYL-PHOSPHATE REDUCTASE, CHLOROPLASTIC-RELATED-RELATED"/>
    <property type="match status" value="1"/>
</dbReference>
<dbReference type="Pfam" id="PF01118">
    <property type="entry name" value="Semialdhyde_dh"/>
    <property type="match status" value="1"/>
</dbReference>
<dbReference type="Pfam" id="PF22698">
    <property type="entry name" value="Semialdhyde_dhC_1"/>
    <property type="match status" value="1"/>
</dbReference>
<dbReference type="SMART" id="SM00859">
    <property type="entry name" value="Semialdhyde_dh"/>
    <property type="match status" value="1"/>
</dbReference>
<dbReference type="SUPFAM" id="SSF55347">
    <property type="entry name" value="Glyceraldehyde-3-phosphate dehydrogenase-like, C-terminal domain"/>
    <property type="match status" value="1"/>
</dbReference>
<dbReference type="SUPFAM" id="SSF51735">
    <property type="entry name" value="NAD(P)-binding Rossmann-fold domains"/>
    <property type="match status" value="1"/>
</dbReference>
<dbReference type="PROSITE" id="PS01224">
    <property type="entry name" value="ARGC"/>
    <property type="match status" value="1"/>
</dbReference>
<gene>
    <name evidence="1" type="primary">argC</name>
    <name type="ordered locus">Pro_0944</name>
</gene>
<accession>Q7VBZ8</accession>
<feature type="chain" id="PRO_0000112434" description="N-acetyl-gamma-glutamyl-phosphate reductase">
    <location>
        <begin position="1"/>
        <end position="359"/>
    </location>
</feature>
<feature type="active site" evidence="1">
    <location>
        <position position="162"/>
    </location>
</feature>
<comment type="function">
    <text evidence="1">Catalyzes the NADPH-dependent reduction of N-acetyl-5-glutamyl phosphate to yield N-acetyl-L-glutamate 5-semialdehyde.</text>
</comment>
<comment type="catalytic activity">
    <reaction evidence="1">
        <text>N-acetyl-L-glutamate 5-semialdehyde + phosphate + NADP(+) = N-acetyl-L-glutamyl 5-phosphate + NADPH + H(+)</text>
        <dbReference type="Rhea" id="RHEA:21588"/>
        <dbReference type="ChEBI" id="CHEBI:15378"/>
        <dbReference type="ChEBI" id="CHEBI:29123"/>
        <dbReference type="ChEBI" id="CHEBI:43474"/>
        <dbReference type="ChEBI" id="CHEBI:57783"/>
        <dbReference type="ChEBI" id="CHEBI:57936"/>
        <dbReference type="ChEBI" id="CHEBI:58349"/>
        <dbReference type="EC" id="1.2.1.38"/>
    </reaction>
</comment>
<comment type="pathway">
    <text evidence="1">Amino-acid biosynthesis; L-arginine biosynthesis; N(2)-acetyl-L-ornithine from L-glutamate: step 3/4.</text>
</comment>
<comment type="subcellular location">
    <subcellularLocation>
        <location evidence="1">Cytoplasm</location>
    </subcellularLocation>
</comment>
<comment type="similarity">
    <text evidence="1">Belongs to the NAGSA dehydrogenase family. Type 1 subfamily.</text>
</comment>
<name>ARGC_PROMA</name>
<evidence type="ECO:0000255" key="1">
    <source>
        <dbReference type="HAMAP-Rule" id="MF_00150"/>
    </source>
</evidence>